<sequence>MGSFSTITASFLLFLACQLLWQTGANPVYGSVSNADLMDFKNLLDHLEDKMPLEDEVVPPQVLSEQNEEAGAALSPLPEVPPWAGEVNPAQRDGGALGRGSWDSSDRSALLKSKLRALLAAPRSLRRSSCFGGRMDRIGAQSGLGCNSFRYRR</sequence>
<protein>
    <recommendedName>
        <fullName evidence="6">Natriuretic peptides A</fullName>
    </recommendedName>
    <alternativeName>
        <fullName evidence="1">Atrial natriuretic factor prohormone</fullName>
        <shortName evidence="2">preproANF</shortName>
        <shortName evidence="1">proANF</shortName>
    </alternativeName>
    <alternativeName>
        <fullName evidence="1">Atrial natriuretic peptide prohormone</fullName>
        <shortName evidence="1">preproANP</shortName>
        <shortName evidence="1">proANP</shortName>
    </alternativeName>
    <alternativeName>
        <fullName evidence="2">Atriopeptigen</fullName>
    </alternativeName>
    <alternativeName>
        <fullName evidence="1">Cardiodilatin</fullName>
        <shortName evidence="1">CDD</shortName>
    </alternativeName>
    <alternativeName>
        <fullName evidence="1">preproCDD-ANF</fullName>
    </alternativeName>
    <component>
        <recommendedName>
            <fullName evidence="1">Long-acting natriuretic peptide</fullName>
            <shortName evidence="1">LANP</shortName>
        </recommendedName>
        <alternativeName>
            <fullName evidence="6">Long-acting natriuretic hormone</fullName>
            <shortName evidence="6">LANH</shortName>
        </alternativeName>
        <alternativeName>
            <fullName evidence="1">Pro atrial natriuretic factor 1-30</fullName>
            <shortName evidence="1">proANF 1-30</shortName>
        </alternativeName>
        <alternativeName>
            <fullName evidence="6">Pro atrial natriuretic peptide 1-30</fullName>
            <shortName evidence="6">proANP 1-30</shortName>
        </alternativeName>
    </component>
    <component>
        <recommendedName>
            <fullName evidence="1">Vessel dilator</fullName>
            <shortName evidence="1">VSDL</shortName>
        </recommendedName>
        <alternativeName>
            <fullName evidence="1">Pro atrial natriuretic factor 31-67</fullName>
            <shortName evidence="1">proANF 31-67</shortName>
        </alternativeName>
        <alternativeName>
            <fullName evidence="6">Pro atrial natriuretic peptide 31-67</fullName>
            <shortName evidence="6">proANP 31-67</shortName>
        </alternativeName>
    </component>
    <component>
        <recommendedName>
            <fullName evidence="1">Kaliuretic peptide</fullName>
            <shortName evidence="1">KP</shortName>
        </recommendedName>
        <alternativeName>
            <fullName evidence="1">Pro atrial natriuretic factor 79-98</fullName>
            <shortName evidence="1">proANF 79-98</shortName>
        </alternativeName>
        <alternativeName>
            <fullName evidence="6">Pro atrial natriuretic peptide 79-98</fullName>
            <shortName evidence="6">proANP 79-98</shortName>
        </alternativeName>
    </component>
    <component>
        <recommendedName>
            <fullName evidence="1">Urodilatin</fullName>
            <shortName evidence="1">URO</shortName>
        </recommendedName>
        <alternativeName>
            <fullName evidence="1">CDD 95-126</fullName>
        </alternativeName>
        <alternativeName>
            <fullName evidence="1">CDD-ANP (95-126)</fullName>
        </alternativeName>
        <alternativeName>
            <fullName evidence="1">Pro atrial natriuretic peptide 95-126</fullName>
            <shortName evidence="1">proANP 95-126</shortName>
        </alternativeName>
    </component>
    <component>
        <recommendedName>
            <fullName evidence="6">Auriculin-C</fullName>
        </recommendedName>
        <alternativeName>
            <fullName evidence="2">Atrial natriuretic factor 1-33</fullName>
            <shortName evidence="2">ANF 1-33</shortName>
        </alternativeName>
    </component>
    <component>
        <recommendedName>
            <fullName evidence="6">Auriculin-D</fullName>
        </recommendedName>
        <alternativeName>
            <fullName evidence="2">Atrial natriuretic factor 3-33</fullName>
            <shortName evidence="2">ANF 3-33</shortName>
        </alternativeName>
    </component>
    <component>
        <recommendedName>
            <fullName evidence="1">Atrial natriuretic peptide</fullName>
            <shortName evidence="1">ANP</shortName>
        </recommendedName>
        <alternativeName>
            <fullName evidence="1">Alpha-atrial natriuretic peptide</fullName>
        </alternativeName>
        <alternativeName>
            <fullName evidence="1">Alpha-hANP</fullName>
        </alternativeName>
        <alternativeName>
            <fullName evidence="1">Atrial natriuretic factor</fullName>
            <shortName evidence="1">ANF</shortName>
        </alternativeName>
        <alternativeName>
            <fullName evidence="1">CDD-ANF</fullName>
        </alternativeName>
        <alternativeName>
            <fullName evidence="1">CDD-ANP (99-126)</fullName>
        </alternativeName>
        <alternativeName>
            <fullName evidence="2">Cardionatrin</fullName>
        </alternativeName>
        <alternativeName>
            <fullName evidence="1">Pro atrial natriuretic factor 99-126</fullName>
            <shortName evidence="1">proANF 99-126</shortName>
        </alternativeName>
    </component>
    <component>
        <recommendedName>
            <fullName evidence="6">Auriculin-B</fullName>
        </recommendedName>
        <alternativeName>
            <fullName evidence="2">Atrial natriuretic factor 8-33</fullName>
            <shortName evidence="2">ANF 8-33</shortName>
        </alternativeName>
    </component>
    <component>
        <recommendedName>
            <fullName evidence="2">Auriculin-A</fullName>
        </recommendedName>
    </component>
    <component>
        <recommendedName>
            <fullName evidence="2">Atriopeptin-1</fullName>
        </recommendedName>
        <alternativeName>
            <fullName evidence="2">Atriopeptin I</fullName>
        </alternativeName>
    </component>
    <component>
        <recommendedName>
            <fullName evidence="2">Atriopeptin-2</fullName>
        </recommendedName>
        <alternativeName>
            <fullName evidence="2">Atriopeptin II</fullName>
        </alternativeName>
    </component>
    <component>
        <recommendedName>
            <fullName evidence="2">Atriopeptin-3</fullName>
        </recommendedName>
        <alternativeName>
            <fullName evidence="2">Atriopeptin III</fullName>
        </alternativeName>
    </component>
</protein>
<feature type="signal peptide" evidence="4">
    <location>
        <begin position="1"/>
        <end position="25"/>
    </location>
</feature>
<feature type="chain" id="PRO_0000449695" description="Natriuretic peptides A" evidence="1">
    <location>
        <begin position="26"/>
        <end position="151"/>
    </location>
</feature>
<feature type="propeptide" id="PRO_0000001488" evidence="6">
    <location>
        <begin position="26"/>
        <end position="123"/>
    </location>
</feature>
<feature type="peptide" id="PRO_0000449696" description="Long-acting natriuretic peptide" evidence="1">
    <location>
        <begin position="26"/>
        <end position="55"/>
    </location>
</feature>
<feature type="peptide" id="PRO_0000449697" description="Vessel dilator" evidence="1">
    <location>
        <begin position="56"/>
        <end position="92"/>
    </location>
</feature>
<feature type="propeptide" id="PRO_0000449698" evidence="1">
    <location>
        <begin position="93"/>
        <end position="103"/>
    </location>
</feature>
<feature type="peptide" id="PRO_0000449699" description="Kaliuretic peptide" evidence="1">
    <location>
        <begin position="104"/>
        <end position="123"/>
    </location>
</feature>
<feature type="peptide" id="PRO_0000449700" description="Auriculin-C" evidence="2">
    <location>
        <begin position="119"/>
        <end position="151"/>
    </location>
</feature>
<feature type="peptide" id="PRO_0000449701" description="Urodilatin" evidence="1">
    <location>
        <begin position="120"/>
        <end position="151"/>
    </location>
</feature>
<feature type="peptide" id="PRO_0000449702" description="Auriculin-D" evidence="2">
    <location>
        <begin position="121"/>
        <end position="145"/>
    </location>
</feature>
<feature type="peptide" id="PRO_0000001489" description="Atrial natriuretic peptide" evidence="1">
    <location>
        <begin position="124"/>
        <end position="151"/>
    </location>
</feature>
<feature type="peptide" id="PRO_0000449703" description="Auriculin-B" evidence="2">
    <location>
        <begin position="127"/>
        <end position="151"/>
    </location>
</feature>
<feature type="peptide" id="PRO_0000449704" description="Auriculin-A" evidence="2">
    <location>
        <begin position="127"/>
        <end position="150"/>
    </location>
</feature>
<feature type="peptide" id="PRO_0000449705" description="Atriopeptin-3" evidence="2">
    <location>
        <begin position="128"/>
        <end position="151"/>
    </location>
</feature>
<feature type="peptide" id="PRO_0000449706" description="Atriopeptin-2" evidence="2">
    <location>
        <begin position="128"/>
        <end position="150"/>
    </location>
</feature>
<feature type="peptide" id="PRO_0000449707" description="Atriopeptin-1" evidence="2">
    <location>
        <begin position="128"/>
        <end position="148"/>
    </location>
</feature>
<feature type="region of interest" description="Disordered" evidence="5">
    <location>
        <begin position="62"/>
        <end position="104"/>
    </location>
</feature>
<feature type="region of interest" description="Important for degradation of atrial natriuretic peptide by IDE" evidence="1">
    <location>
        <begin position="147"/>
        <end position="151"/>
    </location>
</feature>
<feature type="site" description="Cleavage; by CORIN" evidence="1">
    <location>
        <begin position="123"/>
        <end position="124"/>
    </location>
</feature>
<feature type="site" description="Cleavage; by MME" evidence="1">
    <location>
        <begin position="130"/>
        <end position="131"/>
    </location>
</feature>
<feature type="modified residue" description="Phosphoserine" evidence="1">
    <location>
        <position position="129"/>
    </location>
</feature>
<feature type="disulfide bond" evidence="1">
    <location>
        <begin position="130"/>
        <end position="146"/>
    </location>
</feature>
<evidence type="ECO:0000250" key="1">
    <source>
        <dbReference type="UniProtKB" id="P01160"/>
    </source>
</evidence>
<evidence type="ECO:0000250" key="2">
    <source>
        <dbReference type="UniProtKB" id="P01161"/>
    </source>
</evidence>
<evidence type="ECO:0000250" key="3">
    <source>
        <dbReference type="UniProtKB" id="P05125"/>
    </source>
</evidence>
<evidence type="ECO:0000250" key="4">
    <source>
        <dbReference type="UniProtKB" id="P24259"/>
    </source>
</evidence>
<evidence type="ECO:0000256" key="5">
    <source>
        <dbReference type="SAM" id="MobiDB-lite"/>
    </source>
</evidence>
<evidence type="ECO:0000305" key="6"/>
<dbReference type="EMBL" id="AF298813">
    <property type="protein sequence ID" value="AAG23837.1"/>
    <property type="molecule type" value="Genomic_DNA"/>
</dbReference>
<dbReference type="RefSeq" id="XP_003989547.1">
    <property type="nucleotide sequence ID" value="XM_003989498.4"/>
</dbReference>
<dbReference type="STRING" id="9685.ENSFCAP00000056058"/>
<dbReference type="PaxDb" id="9685-ENSFCAP00000000063"/>
<dbReference type="Ensembl" id="ENSFCAT00000062724.2">
    <property type="protein sequence ID" value="ENSFCAP00000048114.1"/>
    <property type="gene ID" value="ENSFCAG00000000072.5"/>
</dbReference>
<dbReference type="GeneID" id="101100575"/>
<dbReference type="KEGG" id="fca:101100575"/>
<dbReference type="CTD" id="4878"/>
<dbReference type="eggNOG" id="ENOG502S9RQ">
    <property type="taxonomic scope" value="Eukaryota"/>
</dbReference>
<dbReference type="GeneTree" id="ENSGT00940000154513"/>
<dbReference type="HOGENOM" id="CLU_144536_0_0_1"/>
<dbReference type="InParanoid" id="Q9GLD0"/>
<dbReference type="OrthoDB" id="8865096at2759"/>
<dbReference type="TreeFam" id="TF106304"/>
<dbReference type="Proteomes" id="UP000011712">
    <property type="component" value="Chromosome C1"/>
</dbReference>
<dbReference type="Bgee" id="ENSFCAG00000000072">
    <property type="expression patterns" value="Expressed in embryonic head and 5 other cell types or tissues"/>
</dbReference>
<dbReference type="GO" id="GO:0042995">
    <property type="term" value="C:cell projection"/>
    <property type="evidence" value="ECO:0007669"/>
    <property type="project" value="UniProtKB-SubCell"/>
</dbReference>
<dbReference type="GO" id="GO:0005576">
    <property type="term" value="C:extracellular region"/>
    <property type="evidence" value="ECO:0007669"/>
    <property type="project" value="UniProtKB-SubCell"/>
</dbReference>
<dbReference type="GO" id="GO:0043204">
    <property type="term" value="C:perikaryon"/>
    <property type="evidence" value="ECO:0007669"/>
    <property type="project" value="UniProtKB-SubCell"/>
</dbReference>
<dbReference type="GO" id="GO:0005179">
    <property type="term" value="F:hormone activity"/>
    <property type="evidence" value="ECO:0007669"/>
    <property type="project" value="UniProtKB-KW"/>
</dbReference>
<dbReference type="GO" id="GO:0006182">
    <property type="term" value="P:cGMP biosynthetic process"/>
    <property type="evidence" value="ECO:0000250"/>
    <property type="project" value="GO_Central"/>
</dbReference>
<dbReference type="GO" id="GO:0007565">
    <property type="term" value="P:female pregnancy"/>
    <property type="evidence" value="ECO:0000250"/>
    <property type="project" value="UniProtKB"/>
</dbReference>
<dbReference type="GO" id="GO:0007168">
    <property type="term" value="P:receptor guanylyl cyclase signaling pathway"/>
    <property type="evidence" value="ECO:0000250"/>
    <property type="project" value="UniProtKB"/>
</dbReference>
<dbReference type="GO" id="GO:0008217">
    <property type="term" value="P:regulation of blood pressure"/>
    <property type="evidence" value="ECO:0000250"/>
    <property type="project" value="UniProtKB"/>
</dbReference>
<dbReference type="GO" id="GO:0042311">
    <property type="term" value="P:vasodilation"/>
    <property type="evidence" value="ECO:0007669"/>
    <property type="project" value="UniProtKB-KW"/>
</dbReference>
<dbReference type="InterPro" id="IPR000663">
    <property type="entry name" value="Natr_peptide"/>
</dbReference>
<dbReference type="InterPro" id="IPR030480">
    <property type="entry name" value="Natr_peptide_CS"/>
</dbReference>
<dbReference type="InterPro" id="IPR050787">
    <property type="entry name" value="Natriuretic_peptide"/>
</dbReference>
<dbReference type="InterPro" id="IPR002407">
    <property type="entry name" value="Natriuretic_peptide_atrial"/>
</dbReference>
<dbReference type="PANTHER" id="PTHR14066">
    <property type="entry name" value="ATRIAL NATRIURETIC FACTOR PRECURSOR"/>
    <property type="match status" value="1"/>
</dbReference>
<dbReference type="PANTHER" id="PTHR14066:SF2">
    <property type="entry name" value="NATRIURETIC PEPTIDES A"/>
    <property type="match status" value="1"/>
</dbReference>
<dbReference type="Pfam" id="PF00212">
    <property type="entry name" value="ANP"/>
    <property type="match status" value="1"/>
</dbReference>
<dbReference type="PRINTS" id="PR00711">
    <property type="entry name" value="ANATPEPTIDE"/>
</dbReference>
<dbReference type="PRINTS" id="PR00710">
    <property type="entry name" value="NATPEPTIDES"/>
</dbReference>
<dbReference type="SMART" id="SM00183">
    <property type="entry name" value="NAT_PEP"/>
    <property type="match status" value="1"/>
</dbReference>
<dbReference type="PROSITE" id="PS00263">
    <property type="entry name" value="NATRIURETIC_PEPTIDE"/>
    <property type="match status" value="1"/>
</dbReference>
<proteinExistence type="inferred from homology"/>
<keyword id="KW-0966">Cell projection</keyword>
<keyword id="KW-1015">Disulfide bond</keyword>
<keyword id="KW-0372">Hormone</keyword>
<keyword id="KW-0597">Phosphoprotein</keyword>
<keyword id="KW-1185">Reference proteome</keyword>
<keyword id="KW-0964">Secreted</keyword>
<keyword id="KW-0732">Signal</keyword>
<keyword id="KW-0838">Vasoactive</keyword>
<keyword id="KW-0840">Vasodilator</keyword>
<accession>Q9GLD0</accession>
<comment type="function">
    <molecule>Atrial natriuretic peptide</molecule>
    <text evidence="1 3">Hormone that plays a key role in mediating cardio-renal homeostasis, and is involved in vascular remodeling and regulating energy metabolism (By similarity). Acts by specifically binding and stimulating NPR1 to produce cGMP, which in turn activates effector proteins, such as PRKG1, that drive various biological responses (By similarity). Regulates vasodilation, natriuresis, diuresis and aldosterone synthesis and is therefore essential for regulating blood pressure, controlling the extracellular fluid volume and maintaining the fluid-electrolyte balance (By similarity). Also involved in inhibiting cardiac remodeling and cardiac hypertrophy by inducing cardiomyocyte apoptosis and attenuating the growth of cardiomyocytes and fibroblasts (By similarity). Plays a role in female pregnancy by promoting trophoblast invasion and spiral artery remodeling in uterus, and thus prevents pregnancy-induced hypertension (By similarity). In adipose tissue, acts in various cGMP- and PKG-dependent pathways to regulate lipid metabolism and energy homeostasis (By similarity). This includes up-regulating lipid metabolism and mitochondrial oxygen utilization by activating the AMP-activated protein kinase (AMPK), and increasing energy expenditure by acting via MAPK11 to promote the UCP1-dependent thermogenesis of brown adipose tissue (By similarity). Binds the clearance receptor NPR3 which removes the hormone from circulation (By similarity).</text>
</comment>
<comment type="function">
    <molecule>Long-acting natriuretic peptide</molecule>
    <text evidence="1 2">May have a role in cardio-renal homeostasis through regulation of natriuresis, diuresis, vasodilation, and inhibiting aldosterone synthesis. In vitro, promotes the production of cGMP and induces vasodilation. May promote natriuresis, at least in part, by enhancing prostaglandin E2 synthesis resulting in the inhibition of renal Na+-K+-ATPase (By similarity). However reports on the involvement of this peptide in mammal blood volume and blood pressure homeostasis are conflicting; according to a report, in vivo it is not sufficient to activate cGMP and does not inhibit collecting duct transport nor effect diuresis and natriuresis (By similarity). Appears to bind to specific receptors that are distinct from the receptors bound by atrial natriuretic peptide and vessel dilator. Possibly enhances protein excretion in urine by decreasing proximal tubular protein reabsorption (By similarity).</text>
</comment>
<comment type="function">
    <molecule>Vessel dilator</molecule>
    <text evidence="1">May have a role in cardio-renal homeostasis through regulation of natriuresis, diuresis, and vasodilation. In vitro, promotes the production of cGMP and induces vasodilation. May promote natriuresis, at least in part, by enhancing prostaglandin E2 synthesis resulting in the inhibition of renal Na+-K+-ATPase. However reports on the involvement of this peptide in mammal blood volume and blood pressure homeostasis are conflicting; according to a report it is not sufficient to activate cGMP and does not inhibit collecting duct transport nor effect diuresis and natriuresis. Appears to bind to specific receptors that are distinct from the receptors bound by the atrial natriuretic and long-acting natriuretic peptides. Possibly functions in protein excretion in urine by maintaining the integrity of the proximal tubules and enhancing protein excretion by decreasing proximal tubular protein reabsorption.</text>
</comment>
<comment type="function">
    <molecule>Kaliuretic peptide</molecule>
    <text evidence="1">May have a role in cardio-renal homeostasis through regulation of diuresis and inhibiting aldosterone synthesis. In vitro, promotes the production of cGMP and induces vasodilation. May promote natriuresis, at least in part, by enhancing prostaglandin E2 synthesis resulting in the inhibition of renal Na+-K+-ATPase. May have a role in potassium excretion but not sodium excretion (natriuresis). Possibly enhances protein excretion in urine by decreasing proximal tubular protein reabsorption.</text>
</comment>
<comment type="function">
    <molecule>Urodilatin</molecule>
    <text evidence="1">Hormone produced in the kidneys that appears to be important for maintaining cardio-renal homeostasis. Mediates vasodilation, natriuresis and diuresis primarily in the renal system, in order to maintain the extracellular fluid volume and control the fluid-electrolyte balance. Specifically binds and stimulates cGMP production by renal transmembrane receptors, likely NPR1. Urodilatin not ANP, may be the natriuretic peptide responsible for the regulation of sodium and water homeostasis in the kidney.</text>
</comment>
<comment type="function">
    <molecule>Auriculin-D</molecule>
    <text evidence="2">May have a role in cardio-renal homeostasis through regulation of natriuresis and vasodilation. In vivo promotes natriuresis and in vitro, vasodilates renal artery strips.</text>
</comment>
<comment type="function">
    <molecule>Auriculin-B</molecule>
    <text evidence="2">May have a role in cardio-renal homeostasis through regulation of natriuresis and vasodilation. In vivo promotes natriuresis and in vitro, vasodilates renal artery strips.</text>
</comment>
<comment type="function">
    <molecule>Auriculin-A</molecule>
    <text evidence="2">May have a role in cardio-renal homeostasis through regulation of regulation of natriuresis and vasodilation. In vivo promotes natriuresis. In vitro, vasodilates intestinal smooth muscle but not smooth muscle strips.</text>
</comment>
<comment type="function">
    <molecule>Atriopeptin-2</molecule>
    <text evidence="2">May have a role in cardio-renal homeostasis through regulation of natriuresis and vasodilation. In vivo promotes natriuresis. In vitro, selectively vasodilates intestinal and vascular smooth muscle strips.</text>
</comment>
<comment type="function">
    <molecule>Atriopeptin-1</molecule>
    <text evidence="2">May have a role in cardio-renal homeostasis through regulation of natriuresis and vasodilation. In vivo promotes natriuresis. In vitro, selectively vasodilates intestinal smooth muscle but not vascular smooth muscle strips.</text>
</comment>
<comment type="subunit">
    <molecule>Atrial natriuretic peptide</molecule>
    <text evidence="1">Homodimer; disulfide-linked antiparallel dimer.</text>
</comment>
<comment type="subcellular location">
    <molecule>Long-acting natriuretic peptide</molecule>
    <subcellularLocation>
        <location evidence="1">Secreted</location>
    </subcellularLocation>
    <text evidence="1">Detected in blood.</text>
</comment>
<comment type="subcellular location">
    <molecule>Vessel dilator</molecule>
    <subcellularLocation>
        <location evidence="1">Secreted</location>
    </subcellularLocation>
    <text evidence="1">Detected in blood.</text>
</comment>
<comment type="subcellular location">
    <molecule>Kaliuretic peptide</molecule>
    <subcellularLocation>
        <location evidence="1">Secreted</location>
    </subcellularLocation>
    <text evidence="1">Detected in blood.</text>
</comment>
<comment type="subcellular location">
    <molecule>Urodilatin</molecule>
    <subcellularLocation>
        <location evidence="1">Secreted</location>
    </subcellularLocation>
    <text evidence="1">Detected in urine. Not detected in blood. Increased electrolytes, osmolality and intracellular cAMP levels increase peptide secretion/excretion.</text>
</comment>
<comment type="subcellular location">
    <molecule>Atrial natriuretic peptide</molecule>
    <subcellularLocation>
        <location evidence="1">Secreted</location>
    </subcellularLocation>
    <subcellularLocation>
        <location evidence="1">Perikaryon</location>
    </subcellularLocation>
    <subcellularLocation>
        <location evidence="1">Cell projection</location>
    </subcellularLocation>
    <text evidence="1 2">Detected in blood. Detected in urine in one study. However, in another study, was not detected in urine. Detected in cytoplasmic bodies and neuronal processes of pyramidal neurons (layers II-VI) (By similarity). Increased secretion in response to the vasopressin AVP (By similarity). Likely to be secreted in response to an increase in atrial pressure or atrial stretch. In kidney cells, secretion increases in response to activated guanylyl cyclases and increased intracellular cAMP levels. Plasma levels increase 15 minutes after a high-salt meal, and decrease back to normal plasma levels 1 hr later (By similarity).</text>
</comment>
<comment type="subcellular location">
    <molecule>Atriopeptin-3</molecule>
    <subcellularLocation>
        <location evidence="2">Secreted</location>
    </subcellularLocation>
    <text evidence="2">Detected in blood. Slight increase in secretion in response to the vasopressin AVP.</text>
</comment>
<comment type="PTM">
    <text evidence="1 2">The precursor molecule is proteolytically cleaved by CORIN at Arg-123 to produce the atrial natriuretic peptide (By similarity). Undergoes further proteolytic cleavage by unknown proteases to give rise to long-acting natriuretic peptide, vessel dilator and kaliuretic peptide (By similarity). Additional processing gives rise to the auriculin and atriopeptin peptides (By similarity). In the kidneys, alternative processing by an unknown protease results in the peptide urodilatin (By similarity).</text>
</comment>
<comment type="PTM">
    <molecule>Atrial natriuretic peptide</molecule>
    <text evidence="1">Cleavage by MME initiates degradation of the factor and thereby regulates its activity. Degradation by IDE results in reduced activation of NPR1 (in vitro). During IDE degradation, the resulting products can temporarily stimulate NPR2 to produce cGMP, before the fragments are completely degraded and inactivated by IDE (in vitro).</text>
</comment>
<comment type="PTM">
    <molecule>Urodilatin</molecule>
    <text evidence="1">Degraded by IDE.</text>
</comment>
<comment type="PTM">
    <molecule>Urodilatin</molecule>
    <text evidence="1">Phosphorylation on Ser-129 decreases vasorelaxant activity.</text>
</comment>
<comment type="similarity">
    <text evidence="6">Belongs to the natriuretic peptide family.</text>
</comment>
<comment type="caution">
    <molecule>Long-acting natriuretic peptide</molecule>
    <text evidence="1 2">Results concerning the involvement of this peptide in blood volume and blood pressure homeostasis are conflicting. Several studies utilising in vitro and heterologous expression systems show that it is able to activate cGMP and promote vasodilation and natriuresis (By similarity). However, an in vivo study in rat found that it is not sufficient to induce any diuretic, natriuretic, nor hypotensive responses, and is unable to bind NPR1 nor increase guanylyl cyclase activity (By similarity).</text>
</comment>
<comment type="caution">
    <molecule>Vessel dilator</molecule>
    <text evidence="1 2">Results concerning the involvement of this peptide in blood volume and blood pressure homeostasis are conflicting. Several studies utilising in vitro and heterologous expression systems show that it is able to activate cGMP and promote vasodilation and natriuresis (By similarity). However, a heterologous and in vivo expression study in rat found that it is not sufficient to induce any diuretic, natriuretic, nor hypotensive responses, and is unable to bind NPR1 nor increase guanylyl cyclase activity (By similarity).</text>
</comment>
<gene>
    <name type="primary">NPPA</name>
</gene>
<name>ANF_FELCA</name>
<reference key="1">
    <citation type="submission" date="2000-08" db="EMBL/GenBank/DDBJ databases">
        <authorList>
            <person name="Biondo A.W."/>
            <person name="Liu Z.L."/>
            <person name="Solter P.F."/>
            <person name="Sisson D.D."/>
        </authorList>
    </citation>
    <scope>NUCLEOTIDE SEQUENCE [GENOMIC DNA]</scope>
</reference>
<organism>
    <name type="scientific">Felis catus</name>
    <name type="common">Cat</name>
    <name type="synonym">Felis silvestris catus</name>
    <dbReference type="NCBI Taxonomy" id="9685"/>
    <lineage>
        <taxon>Eukaryota</taxon>
        <taxon>Metazoa</taxon>
        <taxon>Chordata</taxon>
        <taxon>Craniata</taxon>
        <taxon>Vertebrata</taxon>
        <taxon>Euteleostomi</taxon>
        <taxon>Mammalia</taxon>
        <taxon>Eutheria</taxon>
        <taxon>Laurasiatheria</taxon>
        <taxon>Carnivora</taxon>
        <taxon>Feliformia</taxon>
        <taxon>Felidae</taxon>
        <taxon>Felinae</taxon>
        <taxon>Felis</taxon>
    </lineage>
</organism>